<dbReference type="EC" id="3.1.15.-" evidence="1"/>
<dbReference type="EMBL" id="CP000479">
    <property type="protein sequence ID" value="ABK67072.1"/>
    <property type="molecule type" value="Genomic_DNA"/>
</dbReference>
<dbReference type="RefSeq" id="WP_009975893.1">
    <property type="nucleotide sequence ID" value="NC_008595.1"/>
</dbReference>
<dbReference type="SMR" id="A0QDA8"/>
<dbReference type="GeneID" id="75269444"/>
<dbReference type="KEGG" id="mav:MAV_1664"/>
<dbReference type="HOGENOM" id="CLU_064761_3_0_11"/>
<dbReference type="Proteomes" id="UP000001574">
    <property type="component" value="Chromosome"/>
</dbReference>
<dbReference type="GO" id="GO:0005737">
    <property type="term" value="C:cytoplasm"/>
    <property type="evidence" value="ECO:0007669"/>
    <property type="project" value="UniProtKB-SubCell"/>
</dbReference>
<dbReference type="GO" id="GO:0000175">
    <property type="term" value="F:3'-5'-RNA exonuclease activity"/>
    <property type="evidence" value="ECO:0007669"/>
    <property type="project" value="InterPro"/>
</dbReference>
<dbReference type="GO" id="GO:0003676">
    <property type="term" value="F:nucleic acid binding"/>
    <property type="evidence" value="ECO:0007669"/>
    <property type="project" value="InterPro"/>
</dbReference>
<dbReference type="CDD" id="cd06135">
    <property type="entry name" value="Orn"/>
    <property type="match status" value="1"/>
</dbReference>
<dbReference type="FunFam" id="3.30.420.10:FF:000003">
    <property type="entry name" value="Oligoribonuclease"/>
    <property type="match status" value="1"/>
</dbReference>
<dbReference type="Gene3D" id="3.30.420.10">
    <property type="entry name" value="Ribonuclease H-like superfamily/Ribonuclease H"/>
    <property type="match status" value="1"/>
</dbReference>
<dbReference type="HAMAP" id="MF_00045">
    <property type="entry name" value="Oligoribonuclease"/>
    <property type="match status" value="1"/>
</dbReference>
<dbReference type="InterPro" id="IPR013520">
    <property type="entry name" value="Exonuclease_RNaseT/DNA_pol3"/>
</dbReference>
<dbReference type="InterPro" id="IPR022894">
    <property type="entry name" value="Oligoribonuclease"/>
</dbReference>
<dbReference type="InterPro" id="IPR012337">
    <property type="entry name" value="RNaseH-like_sf"/>
</dbReference>
<dbReference type="InterPro" id="IPR036397">
    <property type="entry name" value="RNaseH_sf"/>
</dbReference>
<dbReference type="NCBIfam" id="NF003765">
    <property type="entry name" value="PRK05359.1"/>
    <property type="match status" value="1"/>
</dbReference>
<dbReference type="PANTHER" id="PTHR11046">
    <property type="entry name" value="OLIGORIBONUCLEASE, MITOCHONDRIAL"/>
    <property type="match status" value="1"/>
</dbReference>
<dbReference type="PANTHER" id="PTHR11046:SF0">
    <property type="entry name" value="OLIGORIBONUCLEASE, MITOCHONDRIAL"/>
    <property type="match status" value="1"/>
</dbReference>
<dbReference type="Pfam" id="PF00929">
    <property type="entry name" value="RNase_T"/>
    <property type="match status" value="1"/>
</dbReference>
<dbReference type="SMART" id="SM00479">
    <property type="entry name" value="EXOIII"/>
    <property type="match status" value="1"/>
</dbReference>
<dbReference type="SUPFAM" id="SSF53098">
    <property type="entry name" value="Ribonuclease H-like"/>
    <property type="match status" value="1"/>
</dbReference>
<feature type="chain" id="PRO_1000004260" description="Oligoribonuclease">
    <location>
        <begin position="1"/>
        <end position="215"/>
    </location>
</feature>
<feature type="domain" description="Exonuclease" evidence="1">
    <location>
        <begin position="5"/>
        <end position="170"/>
    </location>
</feature>
<feature type="region of interest" description="Disordered" evidence="2">
    <location>
        <begin position="196"/>
        <end position="215"/>
    </location>
</feature>
<feature type="compositionally biased region" description="Low complexity" evidence="2">
    <location>
        <begin position="202"/>
        <end position="215"/>
    </location>
</feature>
<feature type="active site" evidence="1">
    <location>
        <position position="127"/>
    </location>
</feature>
<reference key="1">
    <citation type="submission" date="2006-10" db="EMBL/GenBank/DDBJ databases">
        <authorList>
            <person name="Fleischmann R.D."/>
            <person name="Dodson R.J."/>
            <person name="Haft D.H."/>
            <person name="Merkel J.S."/>
            <person name="Nelson W.C."/>
            <person name="Fraser C.M."/>
        </authorList>
    </citation>
    <scope>NUCLEOTIDE SEQUENCE [LARGE SCALE GENOMIC DNA]</scope>
    <source>
        <strain>104</strain>
    </source>
</reference>
<keyword id="KW-0963">Cytoplasm</keyword>
<keyword id="KW-0269">Exonuclease</keyword>
<keyword id="KW-0378">Hydrolase</keyword>
<keyword id="KW-0540">Nuclease</keyword>
<proteinExistence type="inferred from homology"/>
<sequence>MRDELVWIDCEMTGLDLGSDKLIEIAALVTDAELNVLGDGVDVVIHADDAALAAMGEVVTEMHSRSGLIDEVKASTVDLATAEEMVLDYIRTHVKAPKTAPLAGNSIATDRAFIVRDMPALDSYLHYRMIDVSSIKELCRRWYPRIYFGQPVKGLTHRALADIHESIRELQFYRRTAFVAPPGPSTSEIEAVAAALDEGKDAPGPSDSASAPPTG</sequence>
<organism>
    <name type="scientific">Mycobacterium avium (strain 104)</name>
    <dbReference type="NCBI Taxonomy" id="243243"/>
    <lineage>
        <taxon>Bacteria</taxon>
        <taxon>Bacillati</taxon>
        <taxon>Actinomycetota</taxon>
        <taxon>Actinomycetes</taxon>
        <taxon>Mycobacteriales</taxon>
        <taxon>Mycobacteriaceae</taxon>
        <taxon>Mycobacterium</taxon>
        <taxon>Mycobacterium avium complex (MAC)</taxon>
    </lineage>
</organism>
<name>ORN_MYCA1</name>
<accession>A0QDA8</accession>
<protein>
    <recommendedName>
        <fullName evidence="1">Oligoribonuclease</fullName>
        <ecNumber evidence="1">3.1.15.-</ecNumber>
    </recommendedName>
</protein>
<comment type="function">
    <text evidence="1">3'-to-5' exoribonuclease specific for small oligoribonucleotides.</text>
</comment>
<comment type="subcellular location">
    <subcellularLocation>
        <location evidence="1">Cytoplasm</location>
    </subcellularLocation>
</comment>
<comment type="similarity">
    <text evidence="1">Belongs to the oligoribonuclease family.</text>
</comment>
<gene>
    <name evidence="1" type="primary">orn</name>
    <name type="ordered locus">MAV_1664</name>
</gene>
<evidence type="ECO:0000255" key="1">
    <source>
        <dbReference type="HAMAP-Rule" id="MF_00045"/>
    </source>
</evidence>
<evidence type="ECO:0000256" key="2">
    <source>
        <dbReference type="SAM" id="MobiDB-lite"/>
    </source>
</evidence>